<dbReference type="EC" id="3.1.-.-" evidence="1"/>
<dbReference type="EMBL" id="CP000056">
    <property type="protein sequence ID" value="AAX72493.1"/>
    <property type="molecule type" value="Genomic_DNA"/>
</dbReference>
<dbReference type="RefSeq" id="WP_002988954.1">
    <property type="nucleotide sequence ID" value="NC_007296.2"/>
</dbReference>
<dbReference type="SMR" id="Q48S17"/>
<dbReference type="KEGG" id="spb:M28_Spy1383"/>
<dbReference type="HOGENOM" id="CLU_028328_1_0_9"/>
<dbReference type="GO" id="GO:0005886">
    <property type="term" value="C:plasma membrane"/>
    <property type="evidence" value="ECO:0007669"/>
    <property type="project" value="UniProtKB-SubCell"/>
</dbReference>
<dbReference type="GO" id="GO:0003723">
    <property type="term" value="F:RNA binding"/>
    <property type="evidence" value="ECO:0007669"/>
    <property type="project" value="UniProtKB-UniRule"/>
</dbReference>
<dbReference type="GO" id="GO:0004521">
    <property type="term" value="F:RNA endonuclease activity"/>
    <property type="evidence" value="ECO:0007669"/>
    <property type="project" value="UniProtKB-UniRule"/>
</dbReference>
<dbReference type="GO" id="GO:0006402">
    <property type="term" value="P:mRNA catabolic process"/>
    <property type="evidence" value="ECO:0007669"/>
    <property type="project" value="UniProtKB-UniRule"/>
</dbReference>
<dbReference type="CDD" id="cd00077">
    <property type="entry name" value="HDc"/>
    <property type="match status" value="1"/>
</dbReference>
<dbReference type="CDD" id="cd22431">
    <property type="entry name" value="KH-I_RNaseY"/>
    <property type="match status" value="1"/>
</dbReference>
<dbReference type="FunFam" id="1.10.3210.10:FF:000003">
    <property type="entry name" value="Ribonuclease Y"/>
    <property type="match status" value="1"/>
</dbReference>
<dbReference type="Gene3D" id="1.10.3210.10">
    <property type="entry name" value="Hypothetical protein af1432"/>
    <property type="match status" value="1"/>
</dbReference>
<dbReference type="Gene3D" id="3.30.1370.10">
    <property type="entry name" value="K Homology domain, type 1"/>
    <property type="match status" value="1"/>
</dbReference>
<dbReference type="HAMAP" id="MF_00335">
    <property type="entry name" value="RNase_Y"/>
    <property type="match status" value="1"/>
</dbReference>
<dbReference type="InterPro" id="IPR003607">
    <property type="entry name" value="HD/PDEase_dom"/>
</dbReference>
<dbReference type="InterPro" id="IPR006674">
    <property type="entry name" value="HD_domain"/>
</dbReference>
<dbReference type="InterPro" id="IPR006675">
    <property type="entry name" value="HDIG_dom"/>
</dbReference>
<dbReference type="InterPro" id="IPR004087">
    <property type="entry name" value="KH_dom"/>
</dbReference>
<dbReference type="InterPro" id="IPR004088">
    <property type="entry name" value="KH_dom_type_1"/>
</dbReference>
<dbReference type="InterPro" id="IPR036612">
    <property type="entry name" value="KH_dom_type_1_sf"/>
</dbReference>
<dbReference type="InterPro" id="IPR017705">
    <property type="entry name" value="Ribonuclease_Y"/>
</dbReference>
<dbReference type="InterPro" id="IPR022711">
    <property type="entry name" value="RNase_Y_N"/>
</dbReference>
<dbReference type="NCBIfam" id="TIGR00277">
    <property type="entry name" value="HDIG"/>
    <property type="match status" value="1"/>
</dbReference>
<dbReference type="NCBIfam" id="NF000997">
    <property type="entry name" value="PRK00106.1"/>
    <property type="match status" value="1"/>
</dbReference>
<dbReference type="NCBIfam" id="TIGR03319">
    <property type="entry name" value="RNase_Y"/>
    <property type="match status" value="1"/>
</dbReference>
<dbReference type="PANTHER" id="PTHR12826">
    <property type="entry name" value="RIBONUCLEASE Y"/>
    <property type="match status" value="1"/>
</dbReference>
<dbReference type="PANTHER" id="PTHR12826:SF15">
    <property type="entry name" value="RIBONUCLEASE Y"/>
    <property type="match status" value="1"/>
</dbReference>
<dbReference type="Pfam" id="PF01966">
    <property type="entry name" value="HD"/>
    <property type="match status" value="1"/>
</dbReference>
<dbReference type="Pfam" id="PF00013">
    <property type="entry name" value="KH_1"/>
    <property type="match status" value="1"/>
</dbReference>
<dbReference type="Pfam" id="PF12072">
    <property type="entry name" value="RNase_Y_N"/>
    <property type="match status" value="1"/>
</dbReference>
<dbReference type="SMART" id="SM00471">
    <property type="entry name" value="HDc"/>
    <property type="match status" value="1"/>
</dbReference>
<dbReference type="SMART" id="SM00322">
    <property type="entry name" value="KH"/>
    <property type="match status" value="1"/>
</dbReference>
<dbReference type="SUPFAM" id="SSF54791">
    <property type="entry name" value="Eukaryotic type KH-domain (KH-domain type I)"/>
    <property type="match status" value="1"/>
</dbReference>
<dbReference type="SUPFAM" id="SSF109604">
    <property type="entry name" value="HD-domain/PDEase-like"/>
    <property type="match status" value="1"/>
</dbReference>
<dbReference type="PROSITE" id="PS51831">
    <property type="entry name" value="HD"/>
    <property type="match status" value="1"/>
</dbReference>
<dbReference type="PROSITE" id="PS50084">
    <property type="entry name" value="KH_TYPE_1"/>
    <property type="match status" value="1"/>
</dbReference>
<gene>
    <name evidence="1" type="primary">rny</name>
    <name type="ordered locus">M28_Spy1383</name>
</gene>
<evidence type="ECO:0000255" key="1">
    <source>
        <dbReference type="HAMAP-Rule" id="MF_00335"/>
    </source>
</evidence>
<evidence type="ECO:0000255" key="2">
    <source>
        <dbReference type="PROSITE-ProRule" id="PRU01175"/>
    </source>
</evidence>
<evidence type="ECO:0000256" key="3">
    <source>
        <dbReference type="SAM" id="MobiDB-lite"/>
    </source>
</evidence>
<proteinExistence type="inferred from homology"/>
<organism>
    <name type="scientific">Streptococcus pyogenes serotype M28 (strain MGAS6180)</name>
    <dbReference type="NCBI Taxonomy" id="319701"/>
    <lineage>
        <taxon>Bacteria</taxon>
        <taxon>Bacillati</taxon>
        <taxon>Bacillota</taxon>
        <taxon>Bacilli</taxon>
        <taxon>Lactobacillales</taxon>
        <taxon>Streptococcaceae</taxon>
        <taxon>Streptococcus</taxon>
    </lineage>
</organism>
<accession>Q48S17</accession>
<name>RNY_STRPM</name>
<reference key="1">
    <citation type="journal article" date="2005" name="J. Infect. Dis.">
        <title>Genome sequence of a serotype M28 strain of group A Streptococcus: potential new insights into puerperal sepsis and bacterial disease specificity.</title>
        <authorList>
            <person name="Green N.M."/>
            <person name="Zhang S."/>
            <person name="Porcella S.F."/>
            <person name="Nagiec M.J."/>
            <person name="Barbian K.D."/>
            <person name="Beres S.B."/>
            <person name="Lefebvre R.B."/>
            <person name="Musser J.M."/>
        </authorList>
    </citation>
    <scope>NUCLEOTIDE SEQUENCE [LARGE SCALE GENOMIC DNA]</scope>
    <source>
        <strain>MGAS6180</strain>
    </source>
</reference>
<keyword id="KW-1003">Cell membrane</keyword>
<keyword id="KW-0255">Endonuclease</keyword>
<keyword id="KW-0378">Hydrolase</keyword>
<keyword id="KW-0472">Membrane</keyword>
<keyword id="KW-0540">Nuclease</keyword>
<keyword id="KW-0694">RNA-binding</keyword>
<keyword id="KW-0812">Transmembrane</keyword>
<keyword id="KW-1133">Transmembrane helix</keyword>
<sequence length="535" mass="60381">MVNIILLIVSALIGLILGYALISIRLKSAKEAAELTLLNAEQEAVDIRGKAEVDAEHIKKTAKRESKANRKELLLEAKEEARKYREEIEQEFKSERQELKQLETRLAERSLTLDRKDENLSSKEKVLDSKEQSLTDKSKHIDERQLQVEKLEEEKKAELEKVAAMTIAEAREVILMETENKLTHEIATRIRDAERDIKDRTVKTAKDLLAQAMQRLAGEYVTEQTITSVHLPDDNMKGRIIGREGRNIRTLESLTGIDVIIDDTPEVVILSGFDPIRREIARMTLESLIADGRIHPARIEELVEKNRLEMDNRIREYGEAAAYEIGAPNLHPDLIKIMGRLQFRTSFGQNVLRHSVEVGKLAGILAGELGENVALARRAGFLHDMGKAIDREVEGSHVEIGMEFARKYKEHPVVVNTIASHHGDVEPDSVIAVLVAAADALSSARPGARNESMENYIKRLRDLEEIATSFDGVQNSFALQAGREIRIMVQPEKISDDQVVILSHKVREKIENNLDYPGNIKVTVIREMRAVDYAK</sequence>
<comment type="function">
    <text evidence="1">Endoribonuclease that initiates mRNA decay.</text>
</comment>
<comment type="subcellular location">
    <subcellularLocation>
        <location evidence="1">Cell membrane</location>
        <topology evidence="1">Single-pass membrane protein</topology>
    </subcellularLocation>
</comment>
<comment type="similarity">
    <text evidence="1">Belongs to the RNase Y family.</text>
</comment>
<protein>
    <recommendedName>
        <fullName evidence="1">Ribonuclease Y</fullName>
        <shortName evidence="1">RNase Y</shortName>
        <ecNumber evidence="1">3.1.-.-</ecNumber>
    </recommendedName>
</protein>
<feature type="chain" id="PRO_0000344946" description="Ribonuclease Y">
    <location>
        <begin position="1"/>
        <end position="535"/>
    </location>
</feature>
<feature type="transmembrane region" description="Helical" evidence="1">
    <location>
        <begin position="4"/>
        <end position="24"/>
    </location>
</feature>
<feature type="domain" description="KH" evidence="1">
    <location>
        <begin position="225"/>
        <end position="285"/>
    </location>
</feature>
<feature type="domain" description="HD" evidence="2">
    <location>
        <begin position="351"/>
        <end position="444"/>
    </location>
</feature>
<feature type="region of interest" description="Disordered" evidence="3">
    <location>
        <begin position="118"/>
        <end position="141"/>
    </location>
</feature>